<keyword id="KW-1185">Reference proteome</keyword>
<keyword id="KW-0687">Ribonucleoprotein</keyword>
<keyword id="KW-0689">Ribosomal protein</keyword>
<accession>B9MBV5</accession>
<feature type="chain" id="PRO_1000184141" description="Large ribosomal subunit protein uL30">
    <location>
        <begin position="1"/>
        <end position="60"/>
    </location>
</feature>
<gene>
    <name evidence="1" type="primary">rpmD</name>
    <name type="ordered locus">Dtpsy_0391</name>
</gene>
<evidence type="ECO:0000255" key="1">
    <source>
        <dbReference type="HAMAP-Rule" id="MF_01371"/>
    </source>
</evidence>
<evidence type="ECO:0000305" key="2"/>
<proteinExistence type="inferred from homology"/>
<name>RL30_ACIET</name>
<dbReference type="EMBL" id="CP001392">
    <property type="protein sequence ID" value="ACM31875.1"/>
    <property type="molecule type" value="Genomic_DNA"/>
</dbReference>
<dbReference type="RefSeq" id="WP_012655443.1">
    <property type="nucleotide sequence ID" value="NC_011992.1"/>
</dbReference>
<dbReference type="SMR" id="B9MBV5"/>
<dbReference type="GeneID" id="84683095"/>
<dbReference type="KEGG" id="dia:Dtpsy_0391"/>
<dbReference type="eggNOG" id="COG1841">
    <property type="taxonomic scope" value="Bacteria"/>
</dbReference>
<dbReference type="HOGENOM" id="CLU_131047_1_4_4"/>
<dbReference type="Proteomes" id="UP000000450">
    <property type="component" value="Chromosome"/>
</dbReference>
<dbReference type="GO" id="GO:0022625">
    <property type="term" value="C:cytosolic large ribosomal subunit"/>
    <property type="evidence" value="ECO:0007669"/>
    <property type="project" value="TreeGrafter"/>
</dbReference>
<dbReference type="GO" id="GO:0003735">
    <property type="term" value="F:structural constituent of ribosome"/>
    <property type="evidence" value="ECO:0007669"/>
    <property type="project" value="InterPro"/>
</dbReference>
<dbReference type="GO" id="GO:0006412">
    <property type="term" value="P:translation"/>
    <property type="evidence" value="ECO:0007669"/>
    <property type="project" value="UniProtKB-UniRule"/>
</dbReference>
<dbReference type="CDD" id="cd01658">
    <property type="entry name" value="Ribosomal_L30"/>
    <property type="match status" value="1"/>
</dbReference>
<dbReference type="FunFam" id="3.30.1390.20:FF:000001">
    <property type="entry name" value="50S ribosomal protein L30"/>
    <property type="match status" value="1"/>
</dbReference>
<dbReference type="Gene3D" id="3.30.1390.20">
    <property type="entry name" value="Ribosomal protein L30, ferredoxin-like fold domain"/>
    <property type="match status" value="1"/>
</dbReference>
<dbReference type="HAMAP" id="MF_01371_B">
    <property type="entry name" value="Ribosomal_uL30_B"/>
    <property type="match status" value="1"/>
</dbReference>
<dbReference type="InterPro" id="IPR036919">
    <property type="entry name" value="Ribo_uL30_ferredoxin-like_sf"/>
</dbReference>
<dbReference type="InterPro" id="IPR005996">
    <property type="entry name" value="Ribosomal_uL30_bac-type"/>
</dbReference>
<dbReference type="InterPro" id="IPR016082">
    <property type="entry name" value="Ribosomal_uL30_ferredoxin-like"/>
</dbReference>
<dbReference type="NCBIfam" id="TIGR01308">
    <property type="entry name" value="rpmD_bact"/>
    <property type="match status" value="1"/>
</dbReference>
<dbReference type="PANTHER" id="PTHR15892:SF2">
    <property type="entry name" value="LARGE RIBOSOMAL SUBUNIT PROTEIN UL30M"/>
    <property type="match status" value="1"/>
</dbReference>
<dbReference type="PANTHER" id="PTHR15892">
    <property type="entry name" value="MITOCHONDRIAL RIBOSOMAL PROTEIN L30"/>
    <property type="match status" value="1"/>
</dbReference>
<dbReference type="Pfam" id="PF00327">
    <property type="entry name" value="Ribosomal_L30"/>
    <property type="match status" value="1"/>
</dbReference>
<dbReference type="PIRSF" id="PIRSF002211">
    <property type="entry name" value="Ribosomal_L30_bac-type"/>
    <property type="match status" value="1"/>
</dbReference>
<dbReference type="SUPFAM" id="SSF55129">
    <property type="entry name" value="Ribosomal protein L30p/L7e"/>
    <property type="match status" value="1"/>
</dbReference>
<organism>
    <name type="scientific">Acidovorax ebreus (strain TPSY)</name>
    <name type="common">Diaphorobacter sp. (strain TPSY)</name>
    <dbReference type="NCBI Taxonomy" id="535289"/>
    <lineage>
        <taxon>Bacteria</taxon>
        <taxon>Pseudomonadati</taxon>
        <taxon>Pseudomonadota</taxon>
        <taxon>Betaproteobacteria</taxon>
        <taxon>Burkholderiales</taxon>
        <taxon>Comamonadaceae</taxon>
        <taxon>Diaphorobacter</taxon>
    </lineage>
</organism>
<protein>
    <recommendedName>
        <fullName evidence="1">Large ribosomal subunit protein uL30</fullName>
    </recommendedName>
    <alternativeName>
        <fullName evidence="2">50S ribosomal protein L30</fullName>
    </alternativeName>
</protein>
<comment type="subunit">
    <text evidence="1">Part of the 50S ribosomal subunit.</text>
</comment>
<comment type="similarity">
    <text evidence="1">Belongs to the universal ribosomal protein uL30 family.</text>
</comment>
<reference key="1">
    <citation type="submission" date="2009-01" db="EMBL/GenBank/DDBJ databases">
        <title>Complete sequence of Diaphorobacter sp. TPSY.</title>
        <authorList>
            <consortium name="US DOE Joint Genome Institute"/>
            <person name="Lucas S."/>
            <person name="Copeland A."/>
            <person name="Lapidus A."/>
            <person name="Glavina del Rio T."/>
            <person name="Tice H."/>
            <person name="Bruce D."/>
            <person name="Goodwin L."/>
            <person name="Pitluck S."/>
            <person name="Chertkov O."/>
            <person name="Brettin T."/>
            <person name="Detter J.C."/>
            <person name="Han C."/>
            <person name="Larimer F."/>
            <person name="Land M."/>
            <person name="Hauser L."/>
            <person name="Kyrpides N."/>
            <person name="Mikhailova N."/>
            <person name="Coates J.D."/>
        </authorList>
    </citation>
    <scope>NUCLEOTIDE SEQUENCE [LARGE SCALE GENOMIC DNA]</scope>
    <source>
        <strain>TPSY</strain>
    </source>
</reference>
<sequence length="60" mass="6748">MTTQQTIKIQLVRSPIGTKESHRATVRGLGLRKLNSISELKDTPEVRGMINKISYLVKVL</sequence>